<evidence type="ECO:0000250" key="1">
    <source>
        <dbReference type="UniProtKB" id="P09309"/>
    </source>
</evidence>
<evidence type="ECO:0000256" key="2">
    <source>
        <dbReference type="SAM" id="MobiDB-lite"/>
    </source>
</evidence>
<evidence type="ECO:0000269" key="3">
    <source>
    </source>
</evidence>
<evidence type="ECO:0000305" key="4"/>
<protein>
    <recommendedName>
        <fullName>E3 ubiquitin-protein ligase IE61</fullName>
        <ecNumber evidence="4">2.3.2.27</ecNumber>
    </recommendedName>
    <alternativeName>
        <fullName>Immediate-early protein 61</fullName>
        <shortName>IE61</shortName>
    </alternativeName>
</protein>
<reference key="1">
    <citation type="journal article" date="2001" name="Virology">
        <title>The DNA sequence of the simian varicella virus genome.</title>
        <authorList>
            <person name="Gray W.L."/>
            <person name="Starnes H.B."/>
            <person name="White M.W."/>
            <person name="Mahalingam R."/>
        </authorList>
    </citation>
    <scope>NUCLEOTIDE SEQUENCE [LARGE SCALE GENOMIC DNA]</scope>
</reference>
<reference key="2">
    <citation type="journal article" date="2015" name="J. Virol.">
        <title>The ORF61 protein encoded by simian varicella virus and varicella-zoster Virus inhibits NF-kappaB signaling by interfering with IkappaBalpha degradation.</title>
        <authorList>
            <person name="Whitmer T."/>
            <person name="Malouli D."/>
            <person name="Uebelhoer L.S."/>
            <person name="DeFilippis V.R."/>
            <person name="Frueh K."/>
            <person name="Verweij M.C."/>
        </authorList>
    </citation>
    <scope>FUNCTION</scope>
    <scope>INTERACTION WITH HOST BTRC</scope>
</reference>
<accession>Q9E1W2</accession>
<sequence>MNPPAYTSTSGSVASTGNCAICMSAISGLGKTLPCLHDFCFVCIQTWTSTSAQCPLCRTVVSSILHNITSDANYEEYEVIFDDEGYNEDAPLQIPEEPGVNVSPQPPVHSTANSASNTALMRSHAQPRVLAPDNSSVFQPSTSSHASFSSGFAPYSQTPPVGASNLEATRVSRSAVITPTTSTGPRLHLSPSSRSVSQRLQTLFGITKLPGVPTEPPAYAQAEAHFGQANGYGQHRGALHGSYPAVLTAQDTSQIPTRLPFRATDRDVMEVLNSHVICSLCWVGWDEQLATLFPPPIVEPTKTLILNYIAIYGVEDVKLKVSLRCLLHDLTVPFVENMLFLIDRCTDPTRISMQAWTWHDTPIRLLSGPIKSPDGGSTSQDTSVSNIHRSPPGGSSTQPSSGRRPGRPKGVKRRLFVDDDTGVSTNESVFPVINAPIHHKNSKLAALPTGSTTDSNERLVVESPGASAEQPSTSGSSPSPSRRRGRKQGIARIEMLTKKVRRK</sequence>
<dbReference type="EC" id="2.3.2.27" evidence="4"/>
<dbReference type="EMBL" id="AF275348">
    <property type="protein sequence ID" value="AAG27237.1"/>
    <property type="molecule type" value="Genomic_DNA"/>
</dbReference>
<dbReference type="RefSeq" id="NP_077475.1">
    <property type="nucleotide sequence ID" value="NC_002686.2"/>
</dbReference>
<dbReference type="GeneID" id="920510"/>
<dbReference type="KEGG" id="vg:920510"/>
<dbReference type="Proteomes" id="UP000159358">
    <property type="component" value="Segment"/>
</dbReference>
<dbReference type="GO" id="GO:0061630">
    <property type="term" value="F:ubiquitin protein ligase activity"/>
    <property type="evidence" value="ECO:0007669"/>
    <property type="project" value="TreeGrafter"/>
</dbReference>
<dbReference type="GO" id="GO:0008270">
    <property type="term" value="F:zinc ion binding"/>
    <property type="evidence" value="ECO:0007669"/>
    <property type="project" value="UniProtKB-KW"/>
</dbReference>
<dbReference type="GO" id="GO:0006513">
    <property type="term" value="P:protein monoubiquitination"/>
    <property type="evidence" value="ECO:0007669"/>
    <property type="project" value="TreeGrafter"/>
</dbReference>
<dbReference type="GO" id="GO:0000209">
    <property type="term" value="P:protein polyubiquitination"/>
    <property type="evidence" value="ECO:0007669"/>
    <property type="project" value="TreeGrafter"/>
</dbReference>
<dbReference type="GO" id="GO:0039648">
    <property type="term" value="P:symbiont-mediated perturbation of host ubiquitin-like protein modification"/>
    <property type="evidence" value="ECO:0007669"/>
    <property type="project" value="UniProtKB-KW"/>
</dbReference>
<dbReference type="CDD" id="cd23130">
    <property type="entry name" value="RING-HC_EHV1-like"/>
    <property type="match status" value="1"/>
</dbReference>
<dbReference type="Gene3D" id="3.30.40.10">
    <property type="entry name" value="Zinc/RING finger domain, C3HC4 (zinc finger)"/>
    <property type="match status" value="1"/>
</dbReference>
<dbReference type="InterPro" id="IPR018957">
    <property type="entry name" value="Znf_C3HC4_RING-type"/>
</dbReference>
<dbReference type="InterPro" id="IPR001841">
    <property type="entry name" value="Znf_RING"/>
</dbReference>
<dbReference type="InterPro" id="IPR013083">
    <property type="entry name" value="Znf_RING/FYVE/PHD"/>
</dbReference>
<dbReference type="InterPro" id="IPR017907">
    <property type="entry name" value="Znf_RING_CS"/>
</dbReference>
<dbReference type="PANTHER" id="PTHR46077">
    <property type="entry name" value="E3 UBIQUITIN-PROTEIN LIGASE TOPORS"/>
    <property type="match status" value="1"/>
</dbReference>
<dbReference type="PANTHER" id="PTHR46077:SF1">
    <property type="entry name" value="TOP1 BINDING ARGININE_SERINE RICH PROTEIN, E3 UBIQUITIN LIGASE"/>
    <property type="match status" value="1"/>
</dbReference>
<dbReference type="Pfam" id="PF00097">
    <property type="entry name" value="zf-C3HC4"/>
    <property type="match status" value="1"/>
</dbReference>
<dbReference type="SMART" id="SM00184">
    <property type="entry name" value="RING"/>
    <property type="match status" value="1"/>
</dbReference>
<dbReference type="SUPFAM" id="SSF57850">
    <property type="entry name" value="RING/U-box"/>
    <property type="match status" value="1"/>
</dbReference>
<dbReference type="PROSITE" id="PS00518">
    <property type="entry name" value="ZF_RING_1"/>
    <property type="match status" value="1"/>
</dbReference>
<dbReference type="PROSITE" id="PS50089">
    <property type="entry name" value="ZF_RING_2"/>
    <property type="match status" value="1"/>
</dbReference>
<comment type="function">
    <text evidence="1 3">RING-finger E3 ubiquitin ligase that degrades host SP100, one of the major components of ND10 nuclear bodies, thereby disrupting the organization of these bodies. Also plays a role in the inhibition of host NF-kappa-B pathway by blocking the SCF(BTRC)-mediated addition of ubiquitin chains to host IkappaBalpha/NFKBIA, thereby interfering with its degradation.</text>
</comment>
<comment type="catalytic activity">
    <reaction evidence="4">
        <text>S-ubiquitinyl-[E2 ubiquitin-conjugating enzyme]-L-cysteine + [acceptor protein]-L-lysine = [E2 ubiquitin-conjugating enzyme]-L-cysteine + N(6)-ubiquitinyl-[acceptor protein]-L-lysine.</text>
        <dbReference type="EC" id="2.3.2.27"/>
    </reaction>
</comment>
<comment type="subunit">
    <text evidence="3">Interacts with host BTRC; this interaction seems to inactivate SCF-mediated protein degradation in general.</text>
</comment>
<organism>
    <name type="scientific">Cercopithecine herpesvirus 9 (strain DHV)</name>
    <name type="common">CeHV-9</name>
    <name type="synonym">Simian varicella virus</name>
    <dbReference type="NCBI Taxonomy" id="36348"/>
    <lineage>
        <taxon>Viruses</taxon>
        <taxon>Duplodnaviria</taxon>
        <taxon>Heunggongvirae</taxon>
        <taxon>Peploviricota</taxon>
        <taxon>Herviviricetes</taxon>
        <taxon>Herpesvirales</taxon>
        <taxon>Orthoherpesviridae</taxon>
        <taxon>Alphaherpesvirinae</taxon>
        <taxon>Varicellovirus</taxon>
        <taxon>Varicellovirus cercopithecinealpha9</taxon>
    </lineage>
</organism>
<organismHost>
    <name type="scientific">Chlorocebus aethiops</name>
    <name type="common">Green monkey</name>
    <name type="synonym">Cercopithecus aethiops</name>
    <dbReference type="NCBI Taxonomy" id="9534"/>
</organismHost>
<name>IE61_CHV9D</name>
<feature type="chain" id="PRO_0000442577" description="E3 ubiquitin-protein ligase IE61">
    <location>
        <begin position="1"/>
        <end position="503"/>
    </location>
</feature>
<feature type="zinc finger region" description="RING-type">
    <location>
        <begin position="19"/>
        <end position="58"/>
    </location>
</feature>
<feature type="region of interest" description="Disordered" evidence="2">
    <location>
        <begin position="175"/>
        <end position="194"/>
    </location>
</feature>
<feature type="region of interest" description="Disordered" evidence="2">
    <location>
        <begin position="367"/>
        <end position="418"/>
    </location>
</feature>
<feature type="region of interest" description="Disordered" evidence="2">
    <location>
        <begin position="445"/>
        <end position="503"/>
    </location>
</feature>
<feature type="compositionally biased region" description="Polar residues" evidence="2">
    <location>
        <begin position="375"/>
        <end position="388"/>
    </location>
</feature>
<feature type="compositionally biased region" description="Low complexity" evidence="2">
    <location>
        <begin position="389"/>
        <end position="403"/>
    </location>
</feature>
<feature type="compositionally biased region" description="Basic residues" evidence="2">
    <location>
        <begin position="404"/>
        <end position="414"/>
    </location>
</feature>
<feature type="compositionally biased region" description="Low complexity" evidence="2">
    <location>
        <begin position="471"/>
        <end position="480"/>
    </location>
</feature>
<proteinExistence type="evidence at protein level"/>
<keyword id="KW-0945">Host-virus interaction</keyword>
<keyword id="KW-0479">Metal-binding</keyword>
<keyword id="KW-1128">Modulation of host ubiquitin pathway by viral E3 ligase</keyword>
<keyword id="KW-1130">Modulation of host ubiquitin pathway by virus</keyword>
<keyword id="KW-1185">Reference proteome</keyword>
<keyword id="KW-0678">Repressor</keyword>
<keyword id="KW-0804">Transcription</keyword>
<keyword id="KW-0805">Transcription regulation</keyword>
<keyword id="KW-0808">Transferase</keyword>
<keyword id="KW-0833">Ubl conjugation pathway</keyword>
<keyword id="KW-0862">Zinc</keyword>
<keyword id="KW-0863">Zinc-finger</keyword>